<proteinExistence type="inferred from homology"/>
<keyword id="KW-1043">Host membrane</keyword>
<keyword id="KW-0472">Membrane</keyword>
<keyword id="KW-1185">Reference proteome</keyword>
<keyword id="KW-0812">Transmembrane</keyword>
<keyword id="KW-1133">Transmembrane helix</keyword>
<keyword id="KW-1162">Viral penetration into host cytoplasm</keyword>
<keyword id="KW-1241">Viral penetration into host cytoplasm via pilus retraction</keyword>
<keyword id="KW-0946">Virion</keyword>
<keyword id="KW-1160">Virus entry into host cell</keyword>
<evidence type="ECO:0000250" key="1"/>
<evidence type="ECO:0000255" key="2"/>
<evidence type="ECO:0000305" key="3"/>
<comment type="function">
    <text evidence="1">Plays essential roles both in the entry of the viral genome into the bacterial host and in budding process. The formation of the G3P-G6P complex termed adsorption complex is essential for correct termination of filamentous phage assembly (By similarity).</text>
</comment>
<comment type="subunit">
    <text evidence="1">Interacts with G3P; this interaction is required for proper integration of G3P and G6P into the virion.</text>
</comment>
<comment type="subcellular location">
    <subcellularLocation>
        <location evidence="3">Virion</location>
    </subcellularLocation>
    <subcellularLocation>
        <location evidence="3">Host membrane</location>
        <topology evidence="3">Multi-pass membrane protein</topology>
    </subcellularLocation>
    <text evidence="1">Prior to assembly, G6P is found associated with the bacterial host inner membrane. There are about five copies of G6P in the mature virion. They are located together with G3P at the head side of the filamentous virion (By similarity).</text>
</comment>
<comment type="similarity">
    <text evidence="3">Belongs to the inovirus G6P protein family.</text>
</comment>
<gene>
    <name type="primary">VI</name>
</gene>
<accession>O80298</accession>
<organism>
    <name type="scientific">Escherichia phage If1</name>
    <name type="common">Bacteriophage If1</name>
    <dbReference type="NCBI Taxonomy" id="10868"/>
    <lineage>
        <taxon>Viruses</taxon>
        <taxon>Monodnaviria</taxon>
        <taxon>Loebvirae</taxon>
        <taxon>Hofneiviricota</taxon>
        <taxon>Faserviricetes</taxon>
        <taxon>Tubulavirales</taxon>
        <taxon>Inoviridae</taxon>
        <taxon>Infulavirus</taxon>
        <taxon>Infulavirus If1</taxon>
    </lineage>
</organism>
<sequence>MPVFLGLPVLARFIGWLAGALIAYVAKFFTLGIARIALAISLFLGLIIGLNGLLVSYLSDLTSVLPPEIASAVSYVVPANAAPCLYAIFSLKAAVFIFDVKDRIIGYLDWNKS</sequence>
<reference key="1">
    <citation type="submission" date="1993-10" db="EMBL/GenBank/DDBJ databases">
        <title>DNA sequence of the filamentous coliphage If1.</title>
        <authorList>
            <person name="Hill D.F."/>
            <person name="Hughes G."/>
            <person name="McNaughton J.C."/>
            <person name="Stockwell P.A."/>
            <person name="Petersen G.B."/>
        </authorList>
    </citation>
    <scope>NUCLEOTIDE SEQUENCE [GENOMIC DNA]</scope>
</reference>
<feature type="chain" id="PRO_0000098192" description="Head virion protein G6P">
    <location>
        <begin position="1"/>
        <end position="113"/>
    </location>
</feature>
<feature type="transmembrane region" description="Helical" evidence="2">
    <location>
        <begin position="13"/>
        <end position="33"/>
    </location>
</feature>
<feature type="transmembrane region" description="Helical" evidence="2">
    <location>
        <begin position="36"/>
        <end position="56"/>
    </location>
</feature>
<feature type="transmembrane region" description="Helical" evidence="2">
    <location>
        <begin position="69"/>
        <end position="89"/>
    </location>
</feature>
<name>G6P_BPIF1</name>
<dbReference type="EMBL" id="U02303">
    <property type="protein sequence ID" value="AAC62156.1"/>
    <property type="molecule type" value="Genomic_DNA"/>
</dbReference>
<dbReference type="RefSeq" id="NP_047357.1">
    <property type="nucleotide sequence ID" value="NC_001954.1"/>
</dbReference>
<dbReference type="SMR" id="O80298"/>
<dbReference type="GeneID" id="1261856"/>
<dbReference type="KEGG" id="vg:1261856"/>
<dbReference type="OrthoDB" id="39500at10239"/>
<dbReference type="Proteomes" id="UP000001833">
    <property type="component" value="Genome"/>
</dbReference>
<dbReference type="GO" id="GO:0033644">
    <property type="term" value="C:host cell membrane"/>
    <property type="evidence" value="ECO:0007669"/>
    <property type="project" value="UniProtKB-SubCell"/>
</dbReference>
<dbReference type="GO" id="GO:0016020">
    <property type="term" value="C:membrane"/>
    <property type="evidence" value="ECO:0007669"/>
    <property type="project" value="UniProtKB-KW"/>
</dbReference>
<dbReference type="GO" id="GO:0044423">
    <property type="term" value="C:virion component"/>
    <property type="evidence" value="ECO:0007669"/>
    <property type="project" value="UniProtKB-KW"/>
</dbReference>
<dbReference type="GO" id="GO:0046718">
    <property type="term" value="P:symbiont entry into host cell"/>
    <property type="evidence" value="ECO:0007669"/>
    <property type="project" value="UniProtKB-KW"/>
</dbReference>
<dbReference type="InterPro" id="IPR035210">
    <property type="entry name" value="DUF5455"/>
</dbReference>
<dbReference type="Pfam" id="PF17537">
    <property type="entry name" value="DUF5455"/>
    <property type="match status" value="1"/>
</dbReference>
<protein>
    <recommendedName>
        <fullName>Head virion protein G6P</fullName>
    </recommendedName>
    <alternativeName>
        <fullName>Coat protein D</fullName>
    </alternativeName>
    <alternativeName>
        <fullName>G6P</fullName>
    </alternativeName>
</protein>
<organismHost>
    <name type="scientific">Escherichia coli</name>
    <dbReference type="NCBI Taxonomy" id="562"/>
</organismHost>